<evidence type="ECO:0000255" key="1">
    <source>
        <dbReference type="HAMAP-Rule" id="MF_00152"/>
    </source>
</evidence>
<dbReference type="EC" id="3.1.21.2" evidence="1"/>
<dbReference type="EMBL" id="CP001661">
    <property type="protein sequence ID" value="ACT16418.1"/>
    <property type="molecule type" value="Genomic_DNA"/>
</dbReference>
<dbReference type="SMR" id="C6DYE3"/>
<dbReference type="STRING" id="443144.GM21_0337"/>
<dbReference type="KEGG" id="gem:GM21_0337"/>
<dbReference type="eggNOG" id="COG0648">
    <property type="taxonomic scope" value="Bacteria"/>
</dbReference>
<dbReference type="HOGENOM" id="CLU_025885_0_1_7"/>
<dbReference type="OrthoDB" id="9805666at2"/>
<dbReference type="GO" id="GO:0008833">
    <property type="term" value="F:deoxyribonuclease IV (phage-T4-induced) activity"/>
    <property type="evidence" value="ECO:0007669"/>
    <property type="project" value="UniProtKB-UniRule"/>
</dbReference>
<dbReference type="GO" id="GO:0003677">
    <property type="term" value="F:DNA binding"/>
    <property type="evidence" value="ECO:0007669"/>
    <property type="project" value="InterPro"/>
</dbReference>
<dbReference type="GO" id="GO:0003906">
    <property type="term" value="F:DNA-(apurinic or apyrimidinic site) endonuclease activity"/>
    <property type="evidence" value="ECO:0007669"/>
    <property type="project" value="TreeGrafter"/>
</dbReference>
<dbReference type="GO" id="GO:0008081">
    <property type="term" value="F:phosphoric diester hydrolase activity"/>
    <property type="evidence" value="ECO:0007669"/>
    <property type="project" value="TreeGrafter"/>
</dbReference>
<dbReference type="GO" id="GO:0008270">
    <property type="term" value="F:zinc ion binding"/>
    <property type="evidence" value="ECO:0007669"/>
    <property type="project" value="UniProtKB-UniRule"/>
</dbReference>
<dbReference type="GO" id="GO:0006284">
    <property type="term" value="P:base-excision repair"/>
    <property type="evidence" value="ECO:0007669"/>
    <property type="project" value="TreeGrafter"/>
</dbReference>
<dbReference type="CDD" id="cd00019">
    <property type="entry name" value="AP2Ec"/>
    <property type="match status" value="1"/>
</dbReference>
<dbReference type="FunFam" id="3.20.20.150:FF:000001">
    <property type="entry name" value="Probable endonuclease 4"/>
    <property type="match status" value="1"/>
</dbReference>
<dbReference type="Gene3D" id="3.20.20.150">
    <property type="entry name" value="Divalent-metal-dependent TIM barrel enzymes"/>
    <property type="match status" value="1"/>
</dbReference>
<dbReference type="HAMAP" id="MF_00152">
    <property type="entry name" value="Nfo"/>
    <property type="match status" value="1"/>
</dbReference>
<dbReference type="InterPro" id="IPR001719">
    <property type="entry name" value="AP_endonuc_2"/>
</dbReference>
<dbReference type="InterPro" id="IPR018246">
    <property type="entry name" value="AP_endonuc_F2_Zn_BS"/>
</dbReference>
<dbReference type="InterPro" id="IPR036237">
    <property type="entry name" value="Xyl_isomerase-like_sf"/>
</dbReference>
<dbReference type="InterPro" id="IPR013022">
    <property type="entry name" value="Xyl_isomerase-like_TIM-brl"/>
</dbReference>
<dbReference type="NCBIfam" id="TIGR00587">
    <property type="entry name" value="nfo"/>
    <property type="match status" value="1"/>
</dbReference>
<dbReference type="PANTHER" id="PTHR21445:SF0">
    <property type="entry name" value="APURINIC-APYRIMIDINIC ENDONUCLEASE"/>
    <property type="match status" value="1"/>
</dbReference>
<dbReference type="PANTHER" id="PTHR21445">
    <property type="entry name" value="ENDONUCLEASE IV ENDODEOXYRIBONUCLEASE IV"/>
    <property type="match status" value="1"/>
</dbReference>
<dbReference type="Pfam" id="PF01261">
    <property type="entry name" value="AP_endonuc_2"/>
    <property type="match status" value="1"/>
</dbReference>
<dbReference type="SMART" id="SM00518">
    <property type="entry name" value="AP2Ec"/>
    <property type="match status" value="1"/>
</dbReference>
<dbReference type="SUPFAM" id="SSF51658">
    <property type="entry name" value="Xylose isomerase-like"/>
    <property type="match status" value="1"/>
</dbReference>
<dbReference type="PROSITE" id="PS00729">
    <property type="entry name" value="AP_NUCLEASE_F2_1"/>
    <property type="match status" value="1"/>
</dbReference>
<dbReference type="PROSITE" id="PS00730">
    <property type="entry name" value="AP_NUCLEASE_F2_2"/>
    <property type="match status" value="1"/>
</dbReference>
<dbReference type="PROSITE" id="PS00731">
    <property type="entry name" value="AP_NUCLEASE_F2_3"/>
    <property type="match status" value="1"/>
</dbReference>
<dbReference type="PROSITE" id="PS51432">
    <property type="entry name" value="AP_NUCLEASE_F2_4"/>
    <property type="match status" value="1"/>
</dbReference>
<reference key="1">
    <citation type="submission" date="2009-07" db="EMBL/GenBank/DDBJ databases">
        <title>Complete sequence of Geobacter sp. M21.</title>
        <authorList>
            <consortium name="US DOE Joint Genome Institute"/>
            <person name="Lucas S."/>
            <person name="Copeland A."/>
            <person name="Lapidus A."/>
            <person name="Glavina del Rio T."/>
            <person name="Dalin E."/>
            <person name="Tice H."/>
            <person name="Bruce D."/>
            <person name="Goodwin L."/>
            <person name="Pitluck S."/>
            <person name="Saunders E."/>
            <person name="Brettin T."/>
            <person name="Detter J.C."/>
            <person name="Han C."/>
            <person name="Larimer F."/>
            <person name="Land M."/>
            <person name="Hauser L."/>
            <person name="Kyrpides N."/>
            <person name="Ovchinnikova G."/>
            <person name="Lovley D."/>
        </authorList>
    </citation>
    <scope>NUCLEOTIDE SEQUENCE [LARGE SCALE GENOMIC DNA]</scope>
    <source>
        <strain>M21</strain>
    </source>
</reference>
<accession>C6DYE3</accession>
<sequence length="283" mass="30845">MDLLGAHVSIAGGIHNAVDRGVSSGCDVIQIFTQNSNQWKGKAVSPADAQLFRDKLAASGLSHVMSHDIYLINLAAAPGEVKDKSLIAFKEEMQRCAALGIGKIVMHPGSHTGDGEDTGIRRICEAFDQLFGEVPQFTGKVLLENTAGQGTNLGYRFDHLKAIIEGSSYPTRFGVCFDTCHAFASGYPIADRDGYRRTFDEFDRALGIDKLMAFHLNDSKKGLGCKVDRHEHIGAGALGLEPFRFILNDPHFKLVPKFIETPKGDADEMDALNLKLLRSLIEG</sequence>
<keyword id="KW-0227">DNA damage</keyword>
<keyword id="KW-0234">DNA repair</keyword>
<keyword id="KW-0255">Endonuclease</keyword>
<keyword id="KW-0378">Hydrolase</keyword>
<keyword id="KW-0479">Metal-binding</keyword>
<keyword id="KW-0540">Nuclease</keyword>
<keyword id="KW-0862">Zinc</keyword>
<proteinExistence type="inferred from homology"/>
<protein>
    <recommendedName>
        <fullName evidence="1">Probable endonuclease 4</fullName>
        <ecNumber evidence="1">3.1.21.2</ecNumber>
    </recommendedName>
    <alternativeName>
        <fullName evidence="1">Endodeoxyribonuclease IV</fullName>
    </alternativeName>
    <alternativeName>
        <fullName evidence="1">Endonuclease IV</fullName>
    </alternativeName>
</protein>
<gene>
    <name evidence="1" type="primary">nfo</name>
    <name type="ordered locus">GM21_0337</name>
</gene>
<feature type="chain" id="PRO_1000203439" description="Probable endonuclease 4">
    <location>
        <begin position="1"/>
        <end position="283"/>
    </location>
</feature>
<feature type="binding site" evidence="1">
    <location>
        <position position="67"/>
    </location>
    <ligand>
        <name>Zn(2+)</name>
        <dbReference type="ChEBI" id="CHEBI:29105"/>
        <label>1</label>
    </ligand>
</feature>
<feature type="binding site" evidence="1">
    <location>
        <position position="107"/>
    </location>
    <ligand>
        <name>Zn(2+)</name>
        <dbReference type="ChEBI" id="CHEBI:29105"/>
        <label>1</label>
    </ligand>
</feature>
<feature type="binding site" evidence="1">
    <location>
        <position position="144"/>
    </location>
    <ligand>
        <name>Zn(2+)</name>
        <dbReference type="ChEBI" id="CHEBI:29105"/>
        <label>1</label>
    </ligand>
</feature>
<feature type="binding site" evidence="1">
    <location>
        <position position="144"/>
    </location>
    <ligand>
        <name>Zn(2+)</name>
        <dbReference type="ChEBI" id="CHEBI:29105"/>
        <label>2</label>
    </ligand>
</feature>
<feature type="binding site" evidence="1">
    <location>
        <position position="178"/>
    </location>
    <ligand>
        <name>Zn(2+)</name>
        <dbReference type="ChEBI" id="CHEBI:29105"/>
        <label>2</label>
    </ligand>
</feature>
<feature type="binding site" evidence="1">
    <location>
        <position position="181"/>
    </location>
    <ligand>
        <name>Zn(2+)</name>
        <dbReference type="ChEBI" id="CHEBI:29105"/>
        <label>3</label>
    </ligand>
</feature>
<feature type="binding site" evidence="1">
    <location>
        <position position="215"/>
    </location>
    <ligand>
        <name>Zn(2+)</name>
        <dbReference type="ChEBI" id="CHEBI:29105"/>
        <label>2</label>
    </ligand>
</feature>
<feature type="binding site" evidence="1">
    <location>
        <position position="228"/>
    </location>
    <ligand>
        <name>Zn(2+)</name>
        <dbReference type="ChEBI" id="CHEBI:29105"/>
        <label>3</label>
    </ligand>
</feature>
<feature type="binding site" evidence="1">
    <location>
        <position position="230"/>
    </location>
    <ligand>
        <name>Zn(2+)</name>
        <dbReference type="ChEBI" id="CHEBI:29105"/>
        <label>3</label>
    </ligand>
</feature>
<feature type="binding site" evidence="1">
    <location>
        <position position="260"/>
    </location>
    <ligand>
        <name>Zn(2+)</name>
        <dbReference type="ChEBI" id="CHEBI:29105"/>
        <label>2</label>
    </ligand>
</feature>
<organism>
    <name type="scientific">Geobacter sp. (strain M21)</name>
    <dbReference type="NCBI Taxonomy" id="443144"/>
    <lineage>
        <taxon>Bacteria</taxon>
        <taxon>Pseudomonadati</taxon>
        <taxon>Thermodesulfobacteriota</taxon>
        <taxon>Desulfuromonadia</taxon>
        <taxon>Geobacterales</taxon>
        <taxon>Geobacteraceae</taxon>
        <taxon>Geobacter</taxon>
    </lineage>
</organism>
<name>END4_GEOSM</name>
<comment type="function">
    <text evidence="1">Endonuclease IV plays a role in DNA repair. It cleaves phosphodiester bonds at apurinic or apyrimidinic (AP) sites, generating a 3'-hydroxyl group and a 5'-terminal sugar phosphate.</text>
</comment>
<comment type="catalytic activity">
    <reaction evidence="1">
        <text>Endonucleolytic cleavage to 5'-phosphooligonucleotide end-products.</text>
        <dbReference type="EC" id="3.1.21.2"/>
    </reaction>
</comment>
<comment type="cofactor">
    <cofactor evidence="1">
        <name>Zn(2+)</name>
        <dbReference type="ChEBI" id="CHEBI:29105"/>
    </cofactor>
    <text evidence="1">Binds 3 Zn(2+) ions.</text>
</comment>
<comment type="similarity">
    <text evidence="1">Belongs to the AP endonuclease 2 family.</text>
</comment>